<name>HA70D_CBDP</name>
<dbReference type="EMBL" id="AB037920">
    <property type="protein sequence ID" value="BAA90657.1"/>
    <property type="molecule type" value="Genomic_DNA"/>
</dbReference>
<dbReference type="SMR" id="Q9LBR5"/>
<dbReference type="PATRIC" id="fig|1491.434.peg.25"/>
<dbReference type="GO" id="GO:0005576">
    <property type="term" value="C:extracellular region"/>
    <property type="evidence" value="ECO:0007669"/>
    <property type="project" value="UniProtKB-SubCell"/>
</dbReference>
<dbReference type="CDD" id="cd20227">
    <property type="entry name" value="PFM_CPE-like"/>
    <property type="match status" value="1"/>
</dbReference>
<dbReference type="Gene3D" id="2.170.15.20">
    <property type="match status" value="2"/>
</dbReference>
<dbReference type="Gene3D" id="2.60.120.1080">
    <property type="match status" value="1"/>
</dbReference>
<dbReference type="Gene3D" id="2.60.120.1090">
    <property type="match status" value="1"/>
</dbReference>
<dbReference type="InterPro" id="IPR003897">
    <property type="entry name" value="Clenterotox"/>
</dbReference>
<dbReference type="InterPro" id="IPR040597">
    <property type="entry name" value="HA70_C"/>
</dbReference>
<dbReference type="Pfam" id="PF03505">
    <property type="entry name" value="Clenterotox"/>
    <property type="match status" value="2"/>
</dbReference>
<dbReference type="Pfam" id="PF17993">
    <property type="entry name" value="HA70_C"/>
    <property type="match status" value="1"/>
</dbReference>
<dbReference type="PRINTS" id="PR01394">
    <property type="entry name" value="CLENTEROTOXN"/>
</dbReference>
<proteinExistence type="evidence at protein level"/>
<sequence>MSLSIKELYYTKDKSINNVNLADGNYVVNRGDGWILSRQNQNLGGNISNNGCTAIVGDLRIRETATPYYYPTASFNEEYIRNNVQNVFANFTEASEIPIGFEFSKTAPSNKGLYMYLQYTYIRYEIIKVLRNTVIERAVLYVPSLGYAKSIEFNSGEQIDKNFYFTSEDKCILNEKFIYKKIAETTTAKESNDSNNTTNLNTSQTILPYPNGLYVINKGDGYMRTNDKDLIGTLLIETNTSGSIIQPRLRNTTRPLFNTSNPTLFSQEYTEARLNDAFNIQLFNTSTTLFKFVEEAPDNKNISMKAYNTYEKYELINYQNGNIADKAEYYLPSLGKCEVSDAPSPQAPVVETPVEQDGFIQTGPNENIIVGVINPSENIEEISTPIPDDYTYNIPTSIQNNACYVLFTVNTTGVYKINAQNNLPPLIIYESIGSDNMNIQSNTLSNNNIKAINYITGTDSSNAESYLIVSLIKNKNYYIRIPQISSSTTNQLIFKRELGNISDLANSTVNILDNLNTSGTHYYTRQSPDVGNYISYQLTIPGDFNNIASSIFSFRTRNNQGIGTLYRLTESINGYNLITIKNYSDLLNNVEPISLLNGATYIFRVKVTELNNYNIIFDAYRNS</sequence>
<evidence type="ECO:0000269" key="1">
    <source>
    </source>
</evidence>
<evidence type="ECO:0000269" key="2">
    <source>
    </source>
</evidence>
<evidence type="ECO:0000269" key="3">
    <source>
    </source>
</evidence>
<evidence type="ECO:0000303" key="4">
    <source>
    </source>
</evidence>
<evidence type="ECO:0000303" key="5">
    <source>
    </source>
</evidence>
<evidence type="ECO:0000305" key="6"/>
<organism>
    <name type="scientific">Clostridium botulinum D phage</name>
    <name type="common">Clostridium botulinum D bacteriophage</name>
    <dbReference type="NCBI Taxonomy" id="29342"/>
    <lineage>
        <taxon>Viruses</taxon>
        <taxon>Duplodnaviria</taxon>
        <taxon>Heunggongvirae</taxon>
        <taxon>Uroviricota</taxon>
        <taxon>Caudoviricetes</taxon>
    </lineage>
</organism>
<protein>
    <recommendedName>
        <fullName>Hemagglutinin component HA-70 type D</fullName>
    </recommendedName>
    <alternativeName>
        <fullName evidence="5">HA3</fullName>
    </alternativeName>
</protein>
<keyword id="KW-0903">Direct protein sequencing</keyword>
<keyword id="KW-0348">Hemagglutinin</keyword>
<keyword id="KW-0964">Secreted</keyword>
<keyword id="KW-0843">Virulence</keyword>
<gene>
    <name evidence="4" type="primary">ha-70</name>
    <name type="synonym">ha70</name>
</gene>
<reference key="1">
    <citation type="journal article" date="2002" name="J. Biol. Chem.">
        <title>In vitro reconstitution of the Clostridium botulinum type D progenitor toxin.</title>
        <authorList>
            <person name="Kouguchi H."/>
            <person name="Watanabe T."/>
            <person name="Sagane Y."/>
            <person name="Sunagawa H."/>
            <person name="Ohyama T."/>
        </authorList>
    </citation>
    <scope>NUCLEOTIDE SEQUENCE [GENOMIC DNA]</scope>
    <scope>PROTEIN SEQUENCE OF 2-11; 13-24 AND 190-199</scope>
    <scope>FUNCTION</scope>
    <scope>SUBUNIT</scope>
    <scope>SUBCELLULAR LOCATION</scope>
    <scope>PROTEOLYTIC CLEAVAGE</scope>
    <source>
        <strain>D-4947 / Type D</strain>
    </source>
</reference>
<reference key="2">
    <citation type="journal article" date="1995" name="Microbiol. Immunol.">
        <title>Characterization of nontoxic-nonhemagglutinin component of the two types of progenitor toxin (M and L) produced by Clostridium botulinum type D CB-16.</title>
        <authorList>
            <person name="Ohyama T."/>
            <person name="Watanabe T."/>
            <person name="Fujinaga Y."/>
            <person name="Inoue K."/>
            <person name="Sunagawa H."/>
            <person name="Fujii N."/>
            <person name="Oguma K."/>
        </authorList>
    </citation>
    <scope>PROTEIN SEQUENCE OF 7-20 AND 193-207</scope>
    <scope>SUBUNIT</scope>
    <scope>SUBCELLULAR LOCATION</scope>
    <source>
        <strain>CB-16 / Type D / phage d-16 phi</strain>
    </source>
</reference>
<reference key="3">
    <citation type="journal article" date="2007" name="J. Biol. Chem.">
        <title>A novel subunit structure of Clostridium botulinum serotype D toxin complex with three extended arms.</title>
        <authorList>
            <person name="Hasegawa K."/>
            <person name="Watanabe T."/>
            <person name="Suzuki T."/>
            <person name="Yamano A."/>
            <person name="Oikawa T."/>
            <person name="Sato Y."/>
            <person name="Kouguchi H."/>
            <person name="Yoneyama T."/>
            <person name="Niwa K."/>
            <person name="Ikeda T."/>
            <person name="Ohyama T."/>
        </authorList>
    </citation>
    <scope>PROTEIN SEQUENCE OF 2-6</scope>
    <scope>SUBUNIT</scope>
    <scope>SUBCELLULAR LOCATION</scope>
    <source>
        <strain>D-4947 / Type D</strain>
    </source>
</reference>
<organismHost>
    <name type="scientific">Clostridium botulinum</name>
    <dbReference type="NCBI Taxonomy" id="1491"/>
</organismHost>
<comment type="function">
    <text evidence="1 2 6">The hemagglutinin (HA) component of the progenitor toxin protects the structural integrity of the neurotoxin; may increase internalization of the neurotoxin into the bloodstream of the host. Involved in binding to the small intestine through interactions with glycolipids and glycoproteins containing sialic acid moieties (Probable). Erythrocyte agglutination only occurs when the entire complex is assembled (PubMed:17581814). This HA subunit probably connects toxin/NTNHA to HA-33 and HA-17, the other components of the HA complex, and it may also protect the M toxin from proteolysis upon secretion (PubMed:11713244).</text>
</comment>
<comment type="subunit">
    <text evidence="1 2 3">Botulinum toxins are produced as large progenitor toxins of 12S (M toxin, about 280 kDa) and 16S (L toxin, about 650 kDa) (PubMed:17581814). M toxin consists of a non-toxic, non-hemagglutinin component (NTNHA) and the neurotoxin (BoNT/D) (PubMed:11713244, PubMed:17581814, PubMed:8569530). L toxin consists of the M toxin and the 3 hemagglutinin (HA) subcomponents of 70, 33, and 17 kDa (PubMed:8569530). The stoichiometry of the whole complex has been modeled as one BoNT/D, one NTNHA, three HA-70, six HA-33 and three HA-17 (PubMed:17581814). HA-33 and HA-17 crystallize as a heterotrimer with two HA-33 and one HA-17 (PubMed:17581814).</text>
</comment>
<comment type="subcellular location">
    <subcellularLocation>
        <location evidence="1 2 3">Secreted</location>
    </subcellularLocation>
</comment>
<comment type="PTM">
    <text evidence="1">Limited treatment of L toxin with pepsin or trypsin produces shorter HA-70 proteins (called HA-55, HA-23 and HA-22) sometimes observed in vivo in other strains of type C and D botulinum toxin preparations.</text>
</comment>
<comment type="miscellaneous">
    <text evidence="6">This protein can also be encoded on a prophage.</text>
</comment>
<feature type="initiator methionine" description="Removed" evidence="1 2">
    <location>
        <position position="1"/>
    </location>
</feature>
<feature type="chain" id="PRO_0000445711" description="Hemagglutinin component HA-70 type D">
    <location>
        <begin position="2"/>
        <end position="623"/>
    </location>
</feature>
<feature type="sequence conflict" description="In Ref. 2; AA sequence." evidence="6" ref="2">
    <original>D</original>
    <variation>N</variation>
    <location>
        <position position="193"/>
    </location>
</feature>
<feature type="sequence conflict" description="In Ref. 2; AA sequence." evidence="6" ref="2">
    <original>TTNL</original>
    <variation>NINF</variation>
    <location>
        <begin position="197"/>
        <end position="200"/>
    </location>
</feature>
<accession>Q9LBR5</accession>